<comment type="similarity">
    <text evidence="1">Belongs to the bacterial ribosomal protein bL35 family.</text>
</comment>
<accession>B8D732</accession>
<protein>
    <recommendedName>
        <fullName evidence="1">Large ribosomal subunit protein bL35</fullName>
    </recommendedName>
    <alternativeName>
        <fullName evidence="2">50S ribosomal protein L35</fullName>
    </alternativeName>
</protein>
<feature type="chain" id="PRO_1000146128" description="Large ribosomal subunit protein bL35">
    <location>
        <begin position="1"/>
        <end position="65"/>
    </location>
</feature>
<gene>
    <name evidence="1" type="primary">rpmI</name>
    <name type="ordered locus">BUAPTUC7_126</name>
</gene>
<reference key="1">
    <citation type="journal article" date="2009" name="Science">
        <title>The dynamics and time scale of ongoing genomic erosion in symbiotic bacteria.</title>
        <authorList>
            <person name="Moran N.A."/>
            <person name="McLaughlin H.J."/>
            <person name="Sorek R."/>
        </authorList>
    </citation>
    <scope>NUCLEOTIDE SEQUENCE [LARGE SCALE GENOMIC DNA]</scope>
    <source>
        <strain>Tuc7</strain>
    </source>
</reference>
<proteinExistence type="inferred from homology"/>
<dbReference type="EMBL" id="CP001158">
    <property type="protein sequence ID" value="ACL29947.1"/>
    <property type="molecule type" value="Genomic_DNA"/>
</dbReference>
<dbReference type="RefSeq" id="WP_009874083.1">
    <property type="nucleotide sequence ID" value="NC_011834.1"/>
</dbReference>
<dbReference type="SMR" id="B8D732"/>
<dbReference type="KEGG" id="bau:BUAPTUC7_126"/>
<dbReference type="HOGENOM" id="CLU_169643_1_1_6"/>
<dbReference type="GO" id="GO:0022625">
    <property type="term" value="C:cytosolic large ribosomal subunit"/>
    <property type="evidence" value="ECO:0007669"/>
    <property type="project" value="TreeGrafter"/>
</dbReference>
<dbReference type="GO" id="GO:0003735">
    <property type="term" value="F:structural constituent of ribosome"/>
    <property type="evidence" value="ECO:0007669"/>
    <property type="project" value="InterPro"/>
</dbReference>
<dbReference type="GO" id="GO:0006412">
    <property type="term" value="P:translation"/>
    <property type="evidence" value="ECO:0007669"/>
    <property type="project" value="UniProtKB-UniRule"/>
</dbReference>
<dbReference type="FunFam" id="4.10.410.60:FF:000001">
    <property type="entry name" value="50S ribosomal protein L35"/>
    <property type="match status" value="1"/>
</dbReference>
<dbReference type="Gene3D" id="4.10.410.60">
    <property type="match status" value="1"/>
</dbReference>
<dbReference type="HAMAP" id="MF_00514">
    <property type="entry name" value="Ribosomal_bL35"/>
    <property type="match status" value="1"/>
</dbReference>
<dbReference type="InterPro" id="IPR001706">
    <property type="entry name" value="Ribosomal_bL35"/>
</dbReference>
<dbReference type="InterPro" id="IPR021137">
    <property type="entry name" value="Ribosomal_bL35-like"/>
</dbReference>
<dbReference type="InterPro" id="IPR018265">
    <property type="entry name" value="Ribosomal_bL35_CS"/>
</dbReference>
<dbReference type="InterPro" id="IPR037229">
    <property type="entry name" value="Ribosomal_bL35_sf"/>
</dbReference>
<dbReference type="NCBIfam" id="TIGR00001">
    <property type="entry name" value="rpmI_bact"/>
    <property type="match status" value="1"/>
</dbReference>
<dbReference type="PANTHER" id="PTHR33343">
    <property type="entry name" value="54S RIBOSOMAL PROTEIN BL35M"/>
    <property type="match status" value="1"/>
</dbReference>
<dbReference type="PANTHER" id="PTHR33343:SF1">
    <property type="entry name" value="LARGE RIBOSOMAL SUBUNIT PROTEIN BL35M"/>
    <property type="match status" value="1"/>
</dbReference>
<dbReference type="Pfam" id="PF01632">
    <property type="entry name" value="Ribosomal_L35p"/>
    <property type="match status" value="1"/>
</dbReference>
<dbReference type="PRINTS" id="PR00064">
    <property type="entry name" value="RIBOSOMALL35"/>
</dbReference>
<dbReference type="SUPFAM" id="SSF143034">
    <property type="entry name" value="L35p-like"/>
    <property type="match status" value="1"/>
</dbReference>
<dbReference type="PROSITE" id="PS00936">
    <property type="entry name" value="RIBOSOMAL_L35"/>
    <property type="match status" value="1"/>
</dbReference>
<organism>
    <name type="scientific">Buchnera aphidicola subsp. Acyrthosiphon pisum (strain Tuc7)</name>
    <dbReference type="NCBI Taxonomy" id="561501"/>
    <lineage>
        <taxon>Bacteria</taxon>
        <taxon>Pseudomonadati</taxon>
        <taxon>Pseudomonadota</taxon>
        <taxon>Gammaproteobacteria</taxon>
        <taxon>Enterobacterales</taxon>
        <taxon>Erwiniaceae</taxon>
        <taxon>Buchnera</taxon>
    </lineage>
</organism>
<name>RL35_BUCAT</name>
<evidence type="ECO:0000255" key="1">
    <source>
        <dbReference type="HAMAP-Rule" id="MF_00514"/>
    </source>
</evidence>
<evidence type="ECO:0000305" key="2"/>
<sequence length="65" mass="7510">MPKIKTLKSAAKRFKITASGKFKRKQANLRHILTKKTTTKKRHLRPKILVSTGDMDRVKSFLPYA</sequence>
<keyword id="KW-0687">Ribonucleoprotein</keyword>
<keyword id="KW-0689">Ribosomal protein</keyword>